<name>ISPE_SHEFN</name>
<evidence type="ECO:0000255" key="1">
    <source>
        <dbReference type="HAMAP-Rule" id="MF_00061"/>
    </source>
</evidence>
<sequence length="290" mass="31643">MTSTNSRKSAISKSWPAPAKLNLFLHVTGQRADGYHELQTLFQFIDHCDYLDFHITDTPDLILHSTMSDSVADSDNLILKAAKSLKRYTQYEGGAHIWLEKLLPMGGGLGGGSSDAATTLVALNALWKTNISPNKLAEIGLTLGADVPVFINGLSAFAEGVGEKLITVQPPESWYLVIVPDVHVSTQAVFQHPDLPRNTPKLDMSSLMTQQWSNDCQKLVTTKHPQVANALSWLVEYAPSRMTGTGACVFGEFTHSQQALDALAKLPADMQGFVAKGMNKSPLQIRLEQL</sequence>
<proteinExistence type="inferred from homology"/>
<gene>
    <name evidence="1" type="primary">ispE</name>
    <name type="ordered locus">Sfri_0720</name>
</gene>
<dbReference type="EC" id="2.7.1.148" evidence="1"/>
<dbReference type="EMBL" id="CP000447">
    <property type="protein sequence ID" value="ABI70578.1"/>
    <property type="molecule type" value="Genomic_DNA"/>
</dbReference>
<dbReference type="RefSeq" id="WP_011636203.1">
    <property type="nucleotide sequence ID" value="NC_008345.1"/>
</dbReference>
<dbReference type="SMR" id="Q087I7"/>
<dbReference type="STRING" id="318167.Sfri_0720"/>
<dbReference type="KEGG" id="sfr:Sfri_0720"/>
<dbReference type="eggNOG" id="COG1947">
    <property type="taxonomic scope" value="Bacteria"/>
</dbReference>
<dbReference type="HOGENOM" id="CLU_053057_3_0_6"/>
<dbReference type="OrthoDB" id="9809438at2"/>
<dbReference type="UniPathway" id="UPA00056">
    <property type="reaction ID" value="UER00094"/>
</dbReference>
<dbReference type="Proteomes" id="UP000000684">
    <property type="component" value="Chromosome"/>
</dbReference>
<dbReference type="GO" id="GO:0050515">
    <property type="term" value="F:4-(cytidine 5'-diphospho)-2-C-methyl-D-erythritol kinase activity"/>
    <property type="evidence" value="ECO:0007669"/>
    <property type="project" value="UniProtKB-UniRule"/>
</dbReference>
<dbReference type="GO" id="GO:0005524">
    <property type="term" value="F:ATP binding"/>
    <property type="evidence" value="ECO:0007669"/>
    <property type="project" value="UniProtKB-UniRule"/>
</dbReference>
<dbReference type="GO" id="GO:0019288">
    <property type="term" value="P:isopentenyl diphosphate biosynthetic process, methylerythritol 4-phosphate pathway"/>
    <property type="evidence" value="ECO:0007669"/>
    <property type="project" value="UniProtKB-UniRule"/>
</dbReference>
<dbReference type="GO" id="GO:0016114">
    <property type="term" value="P:terpenoid biosynthetic process"/>
    <property type="evidence" value="ECO:0007669"/>
    <property type="project" value="InterPro"/>
</dbReference>
<dbReference type="Gene3D" id="3.30.230.10">
    <property type="match status" value="1"/>
</dbReference>
<dbReference type="Gene3D" id="3.30.70.890">
    <property type="entry name" value="GHMP kinase, C-terminal domain"/>
    <property type="match status" value="1"/>
</dbReference>
<dbReference type="HAMAP" id="MF_00061">
    <property type="entry name" value="IspE"/>
    <property type="match status" value="1"/>
</dbReference>
<dbReference type="InterPro" id="IPR013750">
    <property type="entry name" value="GHMP_kinase_C_dom"/>
</dbReference>
<dbReference type="InterPro" id="IPR036554">
    <property type="entry name" value="GHMP_kinase_C_sf"/>
</dbReference>
<dbReference type="InterPro" id="IPR006204">
    <property type="entry name" value="GHMP_kinase_N_dom"/>
</dbReference>
<dbReference type="InterPro" id="IPR004424">
    <property type="entry name" value="IspE"/>
</dbReference>
<dbReference type="InterPro" id="IPR020568">
    <property type="entry name" value="Ribosomal_Su5_D2-typ_SF"/>
</dbReference>
<dbReference type="InterPro" id="IPR014721">
    <property type="entry name" value="Ribsml_uS5_D2-typ_fold_subgr"/>
</dbReference>
<dbReference type="NCBIfam" id="TIGR00154">
    <property type="entry name" value="ispE"/>
    <property type="match status" value="1"/>
</dbReference>
<dbReference type="PANTHER" id="PTHR43527">
    <property type="entry name" value="4-DIPHOSPHOCYTIDYL-2-C-METHYL-D-ERYTHRITOL KINASE, CHLOROPLASTIC"/>
    <property type="match status" value="1"/>
</dbReference>
<dbReference type="PANTHER" id="PTHR43527:SF2">
    <property type="entry name" value="4-DIPHOSPHOCYTIDYL-2-C-METHYL-D-ERYTHRITOL KINASE, CHLOROPLASTIC"/>
    <property type="match status" value="1"/>
</dbReference>
<dbReference type="Pfam" id="PF08544">
    <property type="entry name" value="GHMP_kinases_C"/>
    <property type="match status" value="1"/>
</dbReference>
<dbReference type="Pfam" id="PF00288">
    <property type="entry name" value="GHMP_kinases_N"/>
    <property type="match status" value="1"/>
</dbReference>
<dbReference type="PIRSF" id="PIRSF010376">
    <property type="entry name" value="IspE"/>
    <property type="match status" value="1"/>
</dbReference>
<dbReference type="SUPFAM" id="SSF55060">
    <property type="entry name" value="GHMP Kinase, C-terminal domain"/>
    <property type="match status" value="1"/>
</dbReference>
<dbReference type="SUPFAM" id="SSF54211">
    <property type="entry name" value="Ribosomal protein S5 domain 2-like"/>
    <property type="match status" value="1"/>
</dbReference>
<organism>
    <name type="scientific">Shewanella frigidimarina (strain NCIMB 400)</name>
    <dbReference type="NCBI Taxonomy" id="318167"/>
    <lineage>
        <taxon>Bacteria</taxon>
        <taxon>Pseudomonadati</taxon>
        <taxon>Pseudomonadota</taxon>
        <taxon>Gammaproteobacteria</taxon>
        <taxon>Alteromonadales</taxon>
        <taxon>Shewanellaceae</taxon>
        <taxon>Shewanella</taxon>
    </lineage>
</organism>
<accession>Q087I7</accession>
<keyword id="KW-0067">ATP-binding</keyword>
<keyword id="KW-0414">Isoprene biosynthesis</keyword>
<keyword id="KW-0418">Kinase</keyword>
<keyword id="KW-0547">Nucleotide-binding</keyword>
<keyword id="KW-1185">Reference proteome</keyword>
<keyword id="KW-0808">Transferase</keyword>
<reference key="1">
    <citation type="submission" date="2006-08" db="EMBL/GenBank/DDBJ databases">
        <title>Complete sequence of Shewanella frigidimarina NCIMB 400.</title>
        <authorList>
            <consortium name="US DOE Joint Genome Institute"/>
            <person name="Copeland A."/>
            <person name="Lucas S."/>
            <person name="Lapidus A."/>
            <person name="Barry K."/>
            <person name="Detter J.C."/>
            <person name="Glavina del Rio T."/>
            <person name="Hammon N."/>
            <person name="Israni S."/>
            <person name="Dalin E."/>
            <person name="Tice H."/>
            <person name="Pitluck S."/>
            <person name="Fredrickson J.K."/>
            <person name="Kolker E."/>
            <person name="McCuel L.A."/>
            <person name="DiChristina T."/>
            <person name="Nealson K.H."/>
            <person name="Newman D."/>
            <person name="Tiedje J.M."/>
            <person name="Zhou J."/>
            <person name="Romine M.F."/>
            <person name="Culley D.E."/>
            <person name="Serres M."/>
            <person name="Chertkov O."/>
            <person name="Brettin T."/>
            <person name="Bruce D."/>
            <person name="Han C."/>
            <person name="Tapia R."/>
            <person name="Gilna P."/>
            <person name="Schmutz J."/>
            <person name="Larimer F."/>
            <person name="Land M."/>
            <person name="Hauser L."/>
            <person name="Kyrpides N."/>
            <person name="Mikhailova N."/>
            <person name="Richardson P."/>
        </authorList>
    </citation>
    <scope>NUCLEOTIDE SEQUENCE [LARGE SCALE GENOMIC DNA]</scope>
    <source>
        <strain>NCIMB 400</strain>
    </source>
</reference>
<comment type="function">
    <text evidence="1">Catalyzes the phosphorylation of the position 2 hydroxy group of 4-diphosphocytidyl-2C-methyl-D-erythritol.</text>
</comment>
<comment type="catalytic activity">
    <reaction evidence="1">
        <text>4-CDP-2-C-methyl-D-erythritol + ATP = 4-CDP-2-C-methyl-D-erythritol 2-phosphate + ADP + H(+)</text>
        <dbReference type="Rhea" id="RHEA:18437"/>
        <dbReference type="ChEBI" id="CHEBI:15378"/>
        <dbReference type="ChEBI" id="CHEBI:30616"/>
        <dbReference type="ChEBI" id="CHEBI:57823"/>
        <dbReference type="ChEBI" id="CHEBI:57919"/>
        <dbReference type="ChEBI" id="CHEBI:456216"/>
        <dbReference type="EC" id="2.7.1.148"/>
    </reaction>
</comment>
<comment type="pathway">
    <text evidence="1">Isoprenoid biosynthesis; isopentenyl diphosphate biosynthesis via DXP pathway; isopentenyl diphosphate from 1-deoxy-D-xylulose 5-phosphate: step 3/6.</text>
</comment>
<comment type="similarity">
    <text evidence="1">Belongs to the GHMP kinase family. IspE subfamily.</text>
</comment>
<feature type="chain" id="PRO_0000335757" description="4-diphosphocytidyl-2-C-methyl-D-erythritol kinase">
    <location>
        <begin position="1"/>
        <end position="290"/>
    </location>
</feature>
<feature type="active site" evidence="1">
    <location>
        <position position="20"/>
    </location>
</feature>
<feature type="active site" evidence="1">
    <location>
        <position position="146"/>
    </location>
</feature>
<feature type="binding site" evidence="1">
    <location>
        <begin position="104"/>
        <end position="114"/>
    </location>
    <ligand>
        <name>ATP</name>
        <dbReference type="ChEBI" id="CHEBI:30616"/>
    </ligand>
</feature>
<protein>
    <recommendedName>
        <fullName evidence="1">4-diphosphocytidyl-2-C-methyl-D-erythritol kinase</fullName>
        <shortName evidence="1">CMK</shortName>
        <ecNumber evidence="1">2.7.1.148</ecNumber>
    </recommendedName>
    <alternativeName>
        <fullName evidence="1">4-(cytidine-5'-diphospho)-2-C-methyl-D-erythritol kinase</fullName>
    </alternativeName>
</protein>